<gene>
    <name evidence="1" type="primary">leuA</name>
    <name type="ordered locus">CA_C0273</name>
</gene>
<reference key="1">
    <citation type="journal article" date="2001" name="J. Bacteriol.">
        <title>Genome sequence and comparative analysis of the solvent-producing bacterium Clostridium acetobutylicum.</title>
        <authorList>
            <person name="Noelling J."/>
            <person name="Breton G."/>
            <person name="Omelchenko M.V."/>
            <person name="Makarova K.S."/>
            <person name="Zeng Q."/>
            <person name="Gibson R."/>
            <person name="Lee H.M."/>
            <person name="Dubois J."/>
            <person name="Qiu D."/>
            <person name="Hitti J."/>
            <person name="Wolf Y.I."/>
            <person name="Tatusov R.L."/>
            <person name="Sabathe F."/>
            <person name="Doucette-Stamm L.A."/>
            <person name="Soucaille P."/>
            <person name="Daly M.J."/>
            <person name="Bennett G.N."/>
            <person name="Koonin E.V."/>
            <person name="Smith D.R."/>
        </authorList>
    </citation>
    <scope>NUCLEOTIDE SEQUENCE [LARGE SCALE GENOMIC DNA]</scope>
    <source>
        <strain>ATCC 824 / DSM 792 / JCM 1419 / IAM 19013 / LMG 5710 / NBRC 13948 / NRRL B-527 / VKM B-1787 / 2291 / W</strain>
    </source>
</reference>
<accession>Q97MC5</accession>
<comment type="function">
    <text evidence="1">Catalyzes the condensation of the acetyl group of acetyl-CoA with 3-methyl-2-oxobutanoate (2-ketoisovalerate) to form 3-carboxy-3-hydroxy-4-methylpentanoate (2-isopropylmalate).</text>
</comment>
<comment type="catalytic activity">
    <reaction evidence="1">
        <text>3-methyl-2-oxobutanoate + acetyl-CoA + H2O = (2S)-2-isopropylmalate + CoA + H(+)</text>
        <dbReference type="Rhea" id="RHEA:21524"/>
        <dbReference type="ChEBI" id="CHEBI:1178"/>
        <dbReference type="ChEBI" id="CHEBI:11851"/>
        <dbReference type="ChEBI" id="CHEBI:15377"/>
        <dbReference type="ChEBI" id="CHEBI:15378"/>
        <dbReference type="ChEBI" id="CHEBI:57287"/>
        <dbReference type="ChEBI" id="CHEBI:57288"/>
        <dbReference type="EC" id="2.3.3.13"/>
    </reaction>
</comment>
<comment type="cofactor">
    <cofactor evidence="1">
        <name>Mg(2+)</name>
        <dbReference type="ChEBI" id="CHEBI:18420"/>
    </cofactor>
</comment>
<comment type="pathway">
    <text evidence="1">Amino-acid biosynthesis; L-leucine biosynthesis; L-leucine from 3-methyl-2-oxobutanoate: step 1/4.</text>
</comment>
<comment type="subunit">
    <text evidence="1">Homodimer.</text>
</comment>
<comment type="subcellular location">
    <subcellularLocation>
        <location evidence="1">Cytoplasm</location>
    </subcellularLocation>
</comment>
<comment type="similarity">
    <text evidence="1">Belongs to the alpha-IPM synthase/homocitrate synthase family. LeuA type 2 subfamily.</text>
</comment>
<name>LEU1_CLOAB</name>
<keyword id="KW-0028">Amino-acid biosynthesis</keyword>
<keyword id="KW-0100">Branched-chain amino acid biosynthesis</keyword>
<keyword id="KW-0963">Cytoplasm</keyword>
<keyword id="KW-0432">Leucine biosynthesis</keyword>
<keyword id="KW-0460">Magnesium</keyword>
<keyword id="KW-0479">Metal-binding</keyword>
<keyword id="KW-1185">Reference proteome</keyword>
<keyword id="KW-0808">Transferase</keyword>
<evidence type="ECO:0000255" key="1">
    <source>
        <dbReference type="HAMAP-Rule" id="MF_00572"/>
    </source>
</evidence>
<protein>
    <recommendedName>
        <fullName evidence="1">2-isopropylmalate synthase</fullName>
        <ecNumber evidence="1">2.3.3.13</ecNumber>
    </recommendedName>
    <alternativeName>
        <fullName evidence="1">Alpha-IPM synthase</fullName>
    </alternativeName>
    <alternativeName>
        <fullName evidence="1">Alpha-isopropylmalate synthase</fullName>
    </alternativeName>
</protein>
<dbReference type="EC" id="2.3.3.13" evidence="1"/>
<dbReference type="EMBL" id="AE001437">
    <property type="protein sequence ID" value="AAK78254.1"/>
    <property type="molecule type" value="Genomic_DNA"/>
</dbReference>
<dbReference type="PIR" id="C96933">
    <property type="entry name" value="C96933"/>
</dbReference>
<dbReference type="RefSeq" id="NP_346914.1">
    <property type="nucleotide sequence ID" value="NC_003030.1"/>
</dbReference>
<dbReference type="RefSeq" id="WP_010963596.1">
    <property type="nucleotide sequence ID" value="NC_003030.1"/>
</dbReference>
<dbReference type="SMR" id="Q97MC5"/>
<dbReference type="STRING" id="272562.CA_C0273"/>
<dbReference type="GeneID" id="44996769"/>
<dbReference type="KEGG" id="cac:CA_C0273"/>
<dbReference type="PATRIC" id="fig|272562.8.peg.459"/>
<dbReference type="eggNOG" id="COG0119">
    <property type="taxonomic scope" value="Bacteria"/>
</dbReference>
<dbReference type="HOGENOM" id="CLU_004588_3_0_9"/>
<dbReference type="OrthoDB" id="9804858at2"/>
<dbReference type="UniPathway" id="UPA00048">
    <property type="reaction ID" value="UER00070"/>
</dbReference>
<dbReference type="Proteomes" id="UP000000814">
    <property type="component" value="Chromosome"/>
</dbReference>
<dbReference type="GO" id="GO:0005737">
    <property type="term" value="C:cytoplasm"/>
    <property type="evidence" value="ECO:0007669"/>
    <property type="project" value="UniProtKB-SubCell"/>
</dbReference>
<dbReference type="GO" id="GO:0003852">
    <property type="term" value="F:2-isopropylmalate synthase activity"/>
    <property type="evidence" value="ECO:0007669"/>
    <property type="project" value="UniProtKB-UniRule"/>
</dbReference>
<dbReference type="GO" id="GO:0003985">
    <property type="term" value="F:acetyl-CoA C-acetyltransferase activity"/>
    <property type="evidence" value="ECO:0007669"/>
    <property type="project" value="UniProtKB-UniRule"/>
</dbReference>
<dbReference type="GO" id="GO:0000287">
    <property type="term" value="F:magnesium ion binding"/>
    <property type="evidence" value="ECO:0007669"/>
    <property type="project" value="UniProtKB-UniRule"/>
</dbReference>
<dbReference type="GO" id="GO:0009098">
    <property type="term" value="P:L-leucine biosynthetic process"/>
    <property type="evidence" value="ECO:0007669"/>
    <property type="project" value="UniProtKB-UniRule"/>
</dbReference>
<dbReference type="CDD" id="cd07942">
    <property type="entry name" value="DRE_TIM_LeuA"/>
    <property type="match status" value="1"/>
</dbReference>
<dbReference type="Gene3D" id="3.30.160.270">
    <property type="match status" value="1"/>
</dbReference>
<dbReference type="Gene3D" id="3.20.20.70">
    <property type="entry name" value="Aldolase class I"/>
    <property type="match status" value="1"/>
</dbReference>
<dbReference type="HAMAP" id="MF_00572">
    <property type="entry name" value="LeuA_type2"/>
    <property type="match status" value="1"/>
</dbReference>
<dbReference type="InterPro" id="IPR013709">
    <property type="entry name" value="2-isopropylmalate_synth_dimer"/>
</dbReference>
<dbReference type="InterPro" id="IPR002034">
    <property type="entry name" value="AIPM/Hcit_synth_CS"/>
</dbReference>
<dbReference type="InterPro" id="IPR013785">
    <property type="entry name" value="Aldolase_TIM"/>
</dbReference>
<dbReference type="InterPro" id="IPR005668">
    <property type="entry name" value="IPM_Synthase"/>
</dbReference>
<dbReference type="InterPro" id="IPR054692">
    <property type="entry name" value="LeuA-like_post-cat"/>
</dbReference>
<dbReference type="InterPro" id="IPR036230">
    <property type="entry name" value="LeuA_allosteric_dom_sf"/>
</dbReference>
<dbReference type="InterPro" id="IPR039371">
    <property type="entry name" value="LeuA_N_DRE-TIM"/>
</dbReference>
<dbReference type="InterPro" id="IPR000891">
    <property type="entry name" value="PYR_CT"/>
</dbReference>
<dbReference type="NCBIfam" id="TIGR00970">
    <property type="entry name" value="leuA_yeast"/>
    <property type="match status" value="1"/>
</dbReference>
<dbReference type="NCBIfam" id="NF002991">
    <property type="entry name" value="PRK03739.1"/>
    <property type="match status" value="1"/>
</dbReference>
<dbReference type="PANTHER" id="PTHR46911">
    <property type="match status" value="1"/>
</dbReference>
<dbReference type="PANTHER" id="PTHR46911:SF1">
    <property type="entry name" value="2-ISOPROPYLMALATE SYNTHASE"/>
    <property type="match status" value="1"/>
</dbReference>
<dbReference type="Pfam" id="PF00682">
    <property type="entry name" value="HMGL-like"/>
    <property type="match status" value="1"/>
</dbReference>
<dbReference type="Pfam" id="PF22615">
    <property type="entry name" value="IPMS_D2"/>
    <property type="match status" value="1"/>
</dbReference>
<dbReference type="Pfam" id="PF08502">
    <property type="entry name" value="LeuA_dimer"/>
    <property type="match status" value="1"/>
</dbReference>
<dbReference type="SMART" id="SM00917">
    <property type="entry name" value="LeuA_dimer"/>
    <property type="match status" value="1"/>
</dbReference>
<dbReference type="SUPFAM" id="SSF110921">
    <property type="entry name" value="2-isopropylmalate synthase LeuA, allosteric (dimerisation) domain"/>
    <property type="match status" value="1"/>
</dbReference>
<dbReference type="SUPFAM" id="SSF51569">
    <property type="entry name" value="Aldolase"/>
    <property type="match status" value="1"/>
</dbReference>
<dbReference type="SUPFAM" id="SSF89000">
    <property type="entry name" value="post-HMGL domain-like"/>
    <property type="match status" value="1"/>
</dbReference>
<dbReference type="PROSITE" id="PS00815">
    <property type="entry name" value="AIPM_HOMOCIT_SYNTH_1"/>
    <property type="match status" value="1"/>
</dbReference>
<dbReference type="PROSITE" id="PS50991">
    <property type="entry name" value="PYR_CT"/>
    <property type="match status" value="1"/>
</dbReference>
<feature type="chain" id="PRO_0000140430" description="2-isopropylmalate synthase">
    <location>
        <begin position="1"/>
        <end position="558"/>
    </location>
</feature>
<feature type="domain" description="Pyruvate carboxyltransferase" evidence="1">
    <location>
        <begin position="28"/>
        <end position="304"/>
    </location>
</feature>
<feature type="region of interest" description="Regulatory domain" evidence="1">
    <location>
        <begin position="438"/>
        <end position="558"/>
    </location>
</feature>
<feature type="binding site" evidence="1">
    <location>
        <position position="37"/>
    </location>
    <ligand>
        <name>Mg(2+)</name>
        <dbReference type="ChEBI" id="CHEBI:18420"/>
    </ligand>
</feature>
<feature type="binding site" evidence="1">
    <location>
        <position position="243"/>
    </location>
    <ligand>
        <name>Mg(2+)</name>
        <dbReference type="ChEBI" id="CHEBI:18420"/>
    </ligand>
</feature>
<feature type="binding site" evidence="1">
    <location>
        <position position="245"/>
    </location>
    <ligand>
        <name>Mg(2+)</name>
        <dbReference type="ChEBI" id="CHEBI:18420"/>
    </ligand>
</feature>
<feature type="binding site" evidence="1">
    <location>
        <position position="279"/>
    </location>
    <ligand>
        <name>Mg(2+)</name>
        <dbReference type="ChEBI" id="CHEBI:18420"/>
    </ligand>
</feature>
<organism>
    <name type="scientific">Clostridium acetobutylicum (strain ATCC 824 / DSM 792 / JCM 1419 / IAM 19013 / LMG 5710 / NBRC 13948 / NRRL B-527 / VKM B-1787 / 2291 / W)</name>
    <dbReference type="NCBI Taxonomy" id="272562"/>
    <lineage>
        <taxon>Bacteria</taxon>
        <taxon>Bacillati</taxon>
        <taxon>Bacillota</taxon>
        <taxon>Clostridia</taxon>
        <taxon>Eubacteriales</taxon>
        <taxon>Clostridiaceae</taxon>
        <taxon>Clostridium</taxon>
    </lineage>
</organism>
<proteinExistence type="inferred from homology"/>
<sequence length="558" mass="63443">MLYNKYVKYPKVKLDNREWPDKQIEKAPIWCSVDLRDGNQALPKPMNVDEKIKMFKMLVDIGFKEIEIGFPSASETEYEFTRKLIEDKLIPEDVTIQVLTQAREHLVKKTFEALKGVKTAIVHVYNSTSELQRRVVFKKDKDEVKSLAIKGAQMVKKYSEYTEYSESKFVFEYSPESFTGTELDYALEVCEAVLNVWKPSKENKAIINLPSTVEMATPNIYADQIEWFCKKLLNRESVILSLHTHNDRGTCTASSELGILAGADRVEGTLFGNGERTGNLDIMNMALNMYSQGVDPELEFSNLNDIVEAYEECTKMVVHERHPYAGKLVFTAFSGSHQDAIRKGLKSLKEGKNKHWEVPYLAVDPHDLGREYEEIIRINSQSGKGGTAYIMESDFGFILPKAMHPEFGKVIKKKSDELDCELSPEQIFKFFKEEYLENRSPYYLKNYKIHSIQNIEEEKNTVDIEAVISVNGKDTSIEGVGNGPVDAFFNAMNNKKYNGCKFISYDEHALNIGSHSKAVAYVQIESQDKKYFGVGISDNIDTASINAIVSALNRSKLK</sequence>